<comment type="function">
    <text evidence="1">Catalyzes the conversion of heme O to heme A by two successive hydroxylations of the methyl group at C8. The first hydroxylation forms heme I, the second hydroxylation results in an unstable dihydroxymethyl group, which spontaneously dehydrates, resulting in the formyl group of heme A.</text>
</comment>
<comment type="catalytic activity">
    <reaction evidence="1">
        <text>Fe(II)-heme o + 2 A + H2O = Fe(II)-heme a + 2 AH2</text>
        <dbReference type="Rhea" id="RHEA:63388"/>
        <dbReference type="ChEBI" id="CHEBI:13193"/>
        <dbReference type="ChEBI" id="CHEBI:15377"/>
        <dbReference type="ChEBI" id="CHEBI:17499"/>
        <dbReference type="ChEBI" id="CHEBI:60530"/>
        <dbReference type="ChEBI" id="CHEBI:61715"/>
        <dbReference type="EC" id="1.17.99.9"/>
    </reaction>
    <physiologicalReaction direction="left-to-right" evidence="1">
        <dbReference type="Rhea" id="RHEA:63389"/>
    </physiologicalReaction>
</comment>
<comment type="cofactor">
    <cofactor evidence="1">
        <name>heme b</name>
        <dbReference type="ChEBI" id="CHEBI:60344"/>
    </cofactor>
</comment>
<comment type="pathway">
    <text evidence="1">Porphyrin-containing compound metabolism; heme A biosynthesis; heme A from heme O: step 1/1.</text>
</comment>
<comment type="subunit">
    <text evidence="1">Interacts with CtaB.</text>
</comment>
<comment type="subcellular location">
    <subcellularLocation>
        <location evidence="1">Cell membrane</location>
        <topology evidence="1">Multi-pass membrane protein</topology>
    </subcellularLocation>
</comment>
<comment type="similarity">
    <text evidence="1">Belongs to the COX15/CtaA family. Type 2 subfamily.</text>
</comment>
<sequence length="358" mass="40910">MAVKRLNDNLLTPVQKRNRKQIQVWLYSILLLCLAIVLVGGATRLTGSGLSITEWKPIHGVIPPIGVEQWQEEFLKYQQITQYKLLNRDMTLSAFKVIFWWEWAHRVLGRLVGLVALLGLIWFWATKRIEKNILFPLIVVPILIAFQGFIGWWMVASGIGQSNLTSVSQYRLAFHLITACLVIIFVTYLSRGLTEYSEKPANQKVQCFAAWLVILVLIEIYLGALVAGLHAGKVYNTWPLMDGQIIPDGLLQHHPYWLNLFENPLTVQFIHRFFAYFLFIVSALHAFYVQKNAPHSTHSRRAFLIFFIIIIQAILGILTLLHEVPISLGLIHQSMALVVLCFAVAHWRATKGAYRAVE</sequence>
<organism>
    <name type="scientific">Bartonella tribocorum (strain CIP 105476 / IBS 506)</name>
    <dbReference type="NCBI Taxonomy" id="382640"/>
    <lineage>
        <taxon>Bacteria</taxon>
        <taxon>Pseudomonadati</taxon>
        <taxon>Pseudomonadota</taxon>
        <taxon>Alphaproteobacteria</taxon>
        <taxon>Hyphomicrobiales</taxon>
        <taxon>Bartonellaceae</taxon>
        <taxon>Bartonella</taxon>
    </lineage>
</organism>
<dbReference type="EC" id="1.17.99.9" evidence="1"/>
<dbReference type="EMBL" id="AM260525">
    <property type="protein sequence ID" value="CAK01684.1"/>
    <property type="molecule type" value="Genomic_DNA"/>
</dbReference>
<dbReference type="SMR" id="A9IVC8"/>
<dbReference type="KEGG" id="btr:BT_1320"/>
<dbReference type="eggNOG" id="COG1612">
    <property type="taxonomic scope" value="Bacteria"/>
</dbReference>
<dbReference type="HOGENOM" id="CLU_017627_0_0_5"/>
<dbReference type="UniPathway" id="UPA00269">
    <property type="reaction ID" value="UER00713"/>
</dbReference>
<dbReference type="Proteomes" id="UP000001592">
    <property type="component" value="Chromosome"/>
</dbReference>
<dbReference type="GO" id="GO:0005886">
    <property type="term" value="C:plasma membrane"/>
    <property type="evidence" value="ECO:0007669"/>
    <property type="project" value="UniProtKB-SubCell"/>
</dbReference>
<dbReference type="GO" id="GO:0046872">
    <property type="term" value="F:metal ion binding"/>
    <property type="evidence" value="ECO:0007669"/>
    <property type="project" value="UniProtKB-KW"/>
</dbReference>
<dbReference type="GO" id="GO:0016653">
    <property type="term" value="F:oxidoreductase activity, acting on NAD(P)H, heme protein as acceptor"/>
    <property type="evidence" value="ECO:0007669"/>
    <property type="project" value="InterPro"/>
</dbReference>
<dbReference type="GO" id="GO:0006784">
    <property type="term" value="P:heme A biosynthetic process"/>
    <property type="evidence" value="ECO:0007669"/>
    <property type="project" value="UniProtKB-UniRule"/>
</dbReference>
<dbReference type="HAMAP" id="MF_01665">
    <property type="entry name" value="HemeA_synth_type2"/>
    <property type="match status" value="1"/>
</dbReference>
<dbReference type="InterPro" id="IPR003780">
    <property type="entry name" value="COX15/CtaA_fam"/>
</dbReference>
<dbReference type="InterPro" id="IPR023754">
    <property type="entry name" value="HemeA_Synthase_type2"/>
</dbReference>
<dbReference type="PANTHER" id="PTHR23289">
    <property type="entry name" value="CYTOCHROME C OXIDASE ASSEMBLY PROTEIN COX15"/>
    <property type="match status" value="1"/>
</dbReference>
<dbReference type="PANTHER" id="PTHR23289:SF2">
    <property type="entry name" value="CYTOCHROME C OXIDASE ASSEMBLY PROTEIN COX15 HOMOLOG"/>
    <property type="match status" value="1"/>
</dbReference>
<dbReference type="Pfam" id="PF02628">
    <property type="entry name" value="COX15-CtaA"/>
    <property type="match status" value="1"/>
</dbReference>
<keyword id="KW-1003">Cell membrane</keyword>
<keyword id="KW-0350">Heme biosynthesis</keyword>
<keyword id="KW-0408">Iron</keyword>
<keyword id="KW-0472">Membrane</keyword>
<keyword id="KW-0479">Metal-binding</keyword>
<keyword id="KW-0560">Oxidoreductase</keyword>
<keyword id="KW-0812">Transmembrane</keyword>
<keyword id="KW-1133">Transmembrane helix</keyword>
<gene>
    <name evidence="1" type="primary">ctaA</name>
    <name type="synonym">cox15</name>
    <name type="ordered locus">BT_1320</name>
</gene>
<protein>
    <recommendedName>
        <fullName evidence="1">Heme A synthase</fullName>
        <shortName evidence="1">HAS</shortName>
        <ecNumber evidence="1">1.17.99.9</ecNumber>
    </recommendedName>
    <alternativeName>
        <fullName evidence="1">Cytochrome aa3-controlling protein</fullName>
    </alternativeName>
</protein>
<name>CTAA_BART1</name>
<evidence type="ECO:0000255" key="1">
    <source>
        <dbReference type="HAMAP-Rule" id="MF_01665"/>
    </source>
</evidence>
<reference key="1">
    <citation type="journal article" date="2007" name="Nat. Genet.">
        <title>Genomic analysis of Bartonella identifies type IV secretion systems as host adaptability factors.</title>
        <authorList>
            <person name="Saenz H.L."/>
            <person name="Engel P."/>
            <person name="Stoeckli M.C."/>
            <person name="Lanz C."/>
            <person name="Raddatz G."/>
            <person name="Vayssier-Taussat M."/>
            <person name="Birtles R."/>
            <person name="Schuster S.C."/>
            <person name="Dehio C."/>
        </authorList>
    </citation>
    <scope>NUCLEOTIDE SEQUENCE [LARGE SCALE GENOMIC DNA]</scope>
    <source>
        <strain>CIP 105476 / IBS 506</strain>
    </source>
</reference>
<feature type="chain" id="PRO_0000349015" description="Heme A synthase">
    <location>
        <begin position="1"/>
        <end position="358"/>
    </location>
</feature>
<feature type="transmembrane region" description="Helical" evidence="1">
    <location>
        <begin position="22"/>
        <end position="42"/>
    </location>
</feature>
<feature type="transmembrane region" description="Helical" evidence="1">
    <location>
        <begin position="107"/>
        <end position="127"/>
    </location>
</feature>
<feature type="transmembrane region" description="Helical" evidence="1">
    <location>
        <begin position="133"/>
        <end position="153"/>
    </location>
</feature>
<feature type="transmembrane region" description="Helical" evidence="1">
    <location>
        <begin position="172"/>
        <end position="192"/>
    </location>
</feature>
<feature type="transmembrane region" description="Helical" evidence="1">
    <location>
        <begin position="208"/>
        <end position="228"/>
    </location>
</feature>
<feature type="transmembrane region" description="Helical" evidence="1">
    <location>
        <begin position="269"/>
        <end position="289"/>
    </location>
</feature>
<feature type="transmembrane region" description="Helical" evidence="1">
    <location>
        <begin position="302"/>
        <end position="322"/>
    </location>
</feature>
<feature type="transmembrane region" description="Helical" evidence="1">
    <location>
        <begin position="324"/>
        <end position="344"/>
    </location>
</feature>
<feature type="binding site" description="axial binding residue" evidence="1">
    <location>
        <position position="271"/>
    </location>
    <ligand>
        <name>heme</name>
        <dbReference type="ChEBI" id="CHEBI:30413"/>
    </ligand>
    <ligandPart>
        <name>Fe</name>
        <dbReference type="ChEBI" id="CHEBI:18248"/>
    </ligandPart>
</feature>
<feature type="binding site" description="axial binding residue" evidence="1">
    <location>
        <position position="332"/>
    </location>
    <ligand>
        <name>heme</name>
        <dbReference type="ChEBI" id="CHEBI:30413"/>
    </ligand>
    <ligandPart>
        <name>Fe</name>
        <dbReference type="ChEBI" id="CHEBI:18248"/>
    </ligandPart>
</feature>
<proteinExistence type="inferred from homology"/>
<accession>A9IVC8</accession>